<comment type="similarity">
    <text evidence="1">Belongs to the UPF0173 family.</text>
</comment>
<gene>
    <name type="ordered locus">THA_544</name>
</gene>
<dbReference type="EMBL" id="CP001185">
    <property type="protein sequence ID" value="ACJ75032.1"/>
    <property type="molecule type" value="Genomic_DNA"/>
</dbReference>
<dbReference type="RefSeq" id="WP_012579640.1">
    <property type="nucleotide sequence ID" value="NC_011653.1"/>
</dbReference>
<dbReference type="SMR" id="B7IG18"/>
<dbReference type="STRING" id="484019.THA_544"/>
<dbReference type="KEGG" id="taf:THA_544"/>
<dbReference type="eggNOG" id="COG2220">
    <property type="taxonomic scope" value="Bacteria"/>
</dbReference>
<dbReference type="HOGENOM" id="CLU_070010_4_0_0"/>
<dbReference type="OrthoDB" id="36975at2"/>
<dbReference type="Proteomes" id="UP000002453">
    <property type="component" value="Chromosome"/>
</dbReference>
<dbReference type="GO" id="GO:0016787">
    <property type="term" value="F:hydrolase activity"/>
    <property type="evidence" value="ECO:0007669"/>
    <property type="project" value="UniProtKB-UniRule"/>
</dbReference>
<dbReference type="Gene3D" id="3.60.15.10">
    <property type="entry name" value="Ribonuclease Z/Hydroxyacylglutathione hydrolase-like"/>
    <property type="match status" value="1"/>
</dbReference>
<dbReference type="HAMAP" id="MF_00457">
    <property type="entry name" value="UPF0173"/>
    <property type="match status" value="1"/>
</dbReference>
<dbReference type="InterPro" id="IPR001279">
    <property type="entry name" value="Metallo-B-lactamas"/>
</dbReference>
<dbReference type="InterPro" id="IPR036866">
    <property type="entry name" value="RibonucZ/Hydroxyglut_hydro"/>
</dbReference>
<dbReference type="InterPro" id="IPR022877">
    <property type="entry name" value="UPF0173"/>
</dbReference>
<dbReference type="InterPro" id="IPR050114">
    <property type="entry name" value="UPF0173_UPF0282_UlaG_hydrolase"/>
</dbReference>
<dbReference type="NCBIfam" id="NF001911">
    <property type="entry name" value="PRK00685.1"/>
    <property type="match status" value="1"/>
</dbReference>
<dbReference type="PANTHER" id="PTHR43546:SF3">
    <property type="entry name" value="UPF0173 METAL-DEPENDENT HYDROLASE MJ1163"/>
    <property type="match status" value="1"/>
</dbReference>
<dbReference type="PANTHER" id="PTHR43546">
    <property type="entry name" value="UPF0173 METAL-DEPENDENT HYDROLASE MJ1163-RELATED"/>
    <property type="match status" value="1"/>
</dbReference>
<dbReference type="Pfam" id="PF12706">
    <property type="entry name" value="Lactamase_B_2"/>
    <property type="match status" value="1"/>
</dbReference>
<dbReference type="SMART" id="SM00849">
    <property type="entry name" value="Lactamase_B"/>
    <property type="match status" value="1"/>
</dbReference>
<dbReference type="SUPFAM" id="SSF56281">
    <property type="entry name" value="Metallo-hydrolase/oxidoreductase"/>
    <property type="match status" value="1"/>
</dbReference>
<name>Y544_THEAB</name>
<sequence>MKITFLGHAVFLIETNKKILIDPFITGNPAFPKDFSFDKIDYILVTHGHGDHIGDTVELSKKYNATVVSNFEICNYLQKKGVNKVHPMHIGGSFNFDFGKLKMTPALHGSGIIEGDNIIYGGNPGGFVIYSEKSVYHAGDTGLTKDMELLRGVDVAILPIGGNFVMDVEDALKAVEMIKPKVVIPMHYNTWDIISADEEKFKKGSKQLGVKCIILKPGESVEI</sequence>
<evidence type="ECO:0000255" key="1">
    <source>
        <dbReference type="HAMAP-Rule" id="MF_00457"/>
    </source>
</evidence>
<accession>B7IG18</accession>
<proteinExistence type="inferred from homology"/>
<protein>
    <recommendedName>
        <fullName evidence="1">UPF0173 metal-dependent hydrolase THA_544</fullName>
    </recommendedName>
</protein>
<reference key="1">
    <citation type="journal article" date="2009" name="J. Bacteriol.">
        <title>The genome of Thermosipho africanus TCF52B: lateral genetic connections to the Firmicutes and Archaea.</title>
        <authorList>
            <person name="Nesboe C.L."/>
            <person name="Bapteste E."/>
            <person name="Curtis B."/>
            <person name="Dahle H."/>
            <person name="Lopez P."/>
            <person name="Macleod D."/>
            <person name="Dlutek M."/>
            <person name="Bowman S."/>
            <person name="Zhaxybayeva O."/>
            <person name="Birkeland N.-K."/>
            <person name="Doolittle W.F."/>
        </authorList>
    </citation>
    <scope>NUCLEOTIDE SEQUENCE [LARGE SCALE GENOMIC DNA]</scope>
    <source>
        <strain>TCF52B</strain>
    </source>
</reference>
<keyword id="KW-0378">Hydrolase</keyword>
<keyword id="KW-1185">Reference proteome</keyword>
<feature type="chain" id="PRO_1000197818" description="UPF0173 metal-dependent hydrolase THA_544">
    <location>
        <begin position="1"/>
        <end position="223"/>
    </location>
</feature>
<organism>
    <name type="scientific">Thermosipho africanus (strain TCF52B)</name>
    <dbReference type="NCBI Taxonomy" id="484019"/>
    <lineage>
        <taxon>Bacteria</taxon>
        <taxon>Thermotogati</taxon>
        <taxon>Thermotogota</taxon>
        <taxon>Thermotogae</taxon>
        <taxon>Thermotogales</taxon>
        <taxon>Fervidobacteriaceae</taxon>
        <taxon>Thermosipho</taxon>
    </lineage>
</organism>